<protein>
    <recommendedName>
        <fullName>Maximins 9/H3</fullName>
    </recommendedName>
    <component>
        <recommendedName>
            <fullName>Maximin-9</fullName>
        </recommendedName>
    </component>
    <component>
        <recommendedName>
            <fullName>Maximin-H3</fullName>
        </recommendedName>
    </component>
</protein>
<organism>
    <name type="scientific">Bombina maxima</name>
    <name type="common">Giant fire-bellied toad</name>
    <name type="synonym">Chinese red belly toad</name>
    <dbReference type="NCBI Taxonomy" id="161274"/>
    <lineage>
        <taxon>Eukaryota</taxon>
        <taxon>Metazoa</taxon>
        <taxon>Chordata</taxon>
        <taxon>Craniata</taxon>
        <taxon>Vertebrata</taxon>
        <taxon>Euteleostomi</taxon>
        <taxon>Amphibia</taxon>
        <taxon>Batrachia</taxon>
        <taxon>Anura</taxon>
        <taxon>Bombinatoridae</taxon>
        <taxon>Bombina</taxon>
    </lineage>
</organism>
<keyword id="KW-0027">Amidation</keyword>
<keyword id="KW-0878">Amphibian defense peptide</keyword>
<keyword id="KW-0044">Antibiotic</keyword>
<keyword id="KW-0929">Antimicrobial</keyword>
<keyword id="KW-0165">Cleavage on pair of basic residues</keyword>
<keyword id="KW-0204">Cytolysis</keyword>
<keyword id="KW-0903">Direct protein sequencing</keyword>
<keyword id="KW-0295">Fungicide</keyword>
<keyword id="KW-0354">Hemolysis</keyword>
<keyword id="KW-0964">Secreted</keyword>
<keyword id="KW-0732">Signal</keyword>
<comment type="function">
    <text evidence="1">Maximin-9 shows antimicrobial activity against bacteria and against the fungus C.albicans. It has little hemolytic activity (By similarity).</text>
</comment>
<comment type="function">
    <text evidence="3">Maximin-H3 shows antibacterial activity against both Gram-positive and Gram-negative bacteria. It also shows antimicrobial activity against the fungus C.albicans. Shows strong hemolytic activity.</text>
</comment>
<comment type="subcellular location">
    <subcellularLocation>
        <location>Secreted</location>
    </subcellularLocation>
</comment>
<comment type="tissue specificity">
    <text>Expressed by the skin glands.</text>
</comment>
<comment type="mass spectrometry" mass="1944.0" method="FAB" evidence="3">
    <molecule>Maximin-H3</molecule>
</comment>
<comment type="similarity">
    <text evidence="5">Belongs to the bombinin family.</text>
</comment>
<name>M9H3_BOMMX</name>
<proteinExistence type="evidence at protein level"/>
<accession>Q58T55</accession>
<evidence type="ECO:0000250" key="1"/>
<evidence type="ECO:0000255" key="2"/>
<evidence type="ECO:0000269" key="3">
    <source>
    </source>
</evidence>
<evidence type="ECO:0000269" key="4">
    <source>
    </source>
</evidence>
<evidence type="ECO:0000305" key="5"/>
<reference key="1">
    <citation type="journal article" date="2005" name="Eur. J. Immunol.">
        <title>Variety of antimicrobial peptides in the Bombina maxima toad and evidence of their rapid diversification.</title>
        <authorList>
            <person name="Lee W.-H."/>
            <person name="Li Y."/>
            <person name="Lai R."/>
            <person name="Li S."/>
            <person name="Zhang Y."/>
            <person name="Wang W."/>
        </authorList>
    </citation>
    <scope>NUCLEOTIDE SEQUENCE [MRNA]</scope>
    <scope>PROTEIN SEQUENCE OF 44-70 AND 124-143</scope>
    <scope>AMIDATION AT TYR-70 AND ILE-143</scope>
    <scope>MASS SPECTROMETRY</scope>
    <source>
        <tissue>Skin</tissue>
    </source>
</reference>
<reference key="2">
    <citation type="journal article" date="2002" name="Peptides">
        <title>Antimicrobial peptides from skin secretions of Chinese red belly toad Bombina maxima.</title>
        <authorList>
            <person name="Lai R."/>
            <person name="Zheng Y.-T."/>
            <person name="Shen J.-H."/>
            <person name="Liu G.-J."/>
            <person name="Liu H."/>
            <person name="Lee W.-H."/>
            <person name="Tang S.-Z."/>
            <person name="Zhang Y."/>
        </authorList>
    </citation>
    <scope>PROTEIN SEQUENCE OF 124-143</scope>
    <scope>AMIDATION AT ILE-143</scope>
    <scope>FUNCTION OF MAXIMIN-H3</scope>
    <scope>MASS SPECTROMETRY</scope>
</reference>
<feature type="signal peptide" evidence="2">
    <location>
        <begin position="1"/>
        <end position="18"/>
    </location>
</feature>
<feature type="propeptide" id="PRO_0000003216" evidence="1">
    <location>
        <begin position="19"/>
        <end position="43"/>
    </location>
</feature>
<feature type="peptide" id="PRO_0000003217" description="Maximin-9">
    <location>
        <begin position="44"/>
        <end position="70"/>
    </location>
</feature>
<feature type="propeptide" id="PRO_0000003218" evidence="3">
    <location>
        <begin position="74"/>
        <end position="123"/>
    </location>
</feature>
<feature type="peptide" id="PRO_0000003219" description="Maximin-H3">
    <location>
        <begin position="124"/>
        <end position="143"/>
    </location>
</feature>
<feature type="modified residue" description="Tyrosine amide" evidence="4">
    <location>
        <position position="70"/>
    </location>
</feature>
<feature type="modified residue" description="Isoleucine amide" evidence="3 4">
    <location>
        <position position="143"/>
    </location>
</feature>
<sequence length="144" mass="16228">MNFKYIVAVSFLIASAYARSVKNDEQSLSQRDVLEEESLREIRGIGRKFLGGVKTTFRCGVKDFASKHLYGKRTAEEHEVMKRLEAIMRDLDSLDHPEEASERETRGFNQDEIANLFTKKEKRILGPVLGLVGNALGGLIKKIG</sequence>
<dbReference type="EMBL" id="AY848989">
    <property type="protein sequence ID" value="AAX50210.1"/>
    <property type="molecule type" value="mRNA"/>
</dbReference>
<dbReference type="EMBL" id="AY849005">
    <property type="protein sequence ID" value="AAX50226.1"/>
    <property type="molecule type" value="mRNA"/>
</dbReference>
<dbReference type="SMR" id="Q58T55"/>
<dbReference type="GO" id="GO:0005576">
    <property type="term" value="C:extracellular region"/>
    <property type="evidence" value="ECO:0007669"/>
    <property type="project" value="UniProtKB-SubCell"/>
</dbReference>
<dbReference type="GO" id="GO:0042742">
    <property type="term" value="P:defense response to bacterium"/>
    <property type="evidence" value="ECO:0007669"/>
    <property type="project" value="UniProtKB-KW"/>
</dbReference>
<dbReference type="GO" id="GO:0050832">
    <property type="term" value="P:defense response to fungus"/>
    <property type="evidence" value="ECO:0007669"/>
    <property type="project" value="UniProtKB-KW"/>
</dbReference>
<dbReference type="GO" id="GO:0031640">
    <property type="term" value="P:killing of cells of another organism"/>
    <property type="evidence" value="ECO:0007669"/>
    <property type="project" value="UniProtKB-KW"/>
</dbReference>
<dbReference type="InterPro" id="IPR007962">
    <property type="entry name" value="Bombinin"/>
</dbReference>
<dbReference type="Pfam" id="PF05298">
    <property type="entry name" value="Bombinin"/>
    <property type="match status" value="1"/>
</dbReference>